<feature type="chain" id="PRO_1000199588" description="UPF0352 protein YejL">
    <location>
        <begin position="1"/>
        <end position="75"/>
    </location>
</feature>
<dbReference type="EMBL" id="CU928164">
    <property type="protein sequence ID" value="CAR18454.1"/>
    <property type="molecule type" value="Genomic_DNA"/>
</dbReference>
<dbReference type="RefSeq" id="WP_001135664.1">
    <property type="nucleotide sequence ID" value="NC_011750.1"/>
</dbReference>
<dbReference type="RefSeq" id="YP_002408288.1">
    <property type="nucleotide sequence ID" value="NC_011750.1"/>
</dbReference>
<dbReference type="SMR" id="B7NN02"/>
<dbReference type="STRING" id="585057.ECIAI39_2328"/>
<dbReference type="KEGG" id="ect:ECIAI39_2328"/>
<dbReference type="PATRIC" id="fig|585057.6.peg.2426"/>
<dbReference type="HOGENOM" id="CLU_175457_0_0_6"/>
<dbReference type="Proteomes" id="UP000000749">
    <property type="component" value="Chromosome"/>
</dbReference>
<dbReference type="FunFam" id="1.10.3390.10:FF:000001">
    <property type="entry name" value="UPF0352 protein YejL"/>
    <property type="match status" value="1"/>
</dbReference>
<dbReference type="Gene3D" id="1.10.3390.10">
    <property type="entry name" value="YejL-like"/>
    <property type="match status" value="1"/>
</dbReference>
<dbReference type="HAMAP" id="MF_00816">
    <property type="entry name" value="UPF0352"/>
    <property type="match status" value="1"/>
</dbReference>
<dbReference type="InterPro" id="IPR009857">
    <property type="entry name" value="UPF0352"/>
</dbReference>
<dbReference type="InterPro" id="IPR023202">
    <property type="entry name" value="YejL_sf"/>
</dbReference>
<dbReference type="NCBIfam" id="NF010242">
    <property type="entry name" value="PRK13689.1"/>
    <property type="match status" value="1"/>
</dbReference>
<dbReference type="Pfam" id="PF07208">
    <property type="entry name" value="DUF1414"/>
    <property type="match status" value="1"/>
</dbReference>
<dbReference type="PIRSF" id="PIRSF006188">
    <property type="entry name" value="UCP006188"/>
    <property type="match status" value="1"/>
</dbReference>
<dbReference type="SUPFAM" id="SSF158651">
    <property type="entry name" value="YejL-like"/>
    <property type="match status" value="1"/>
</dbReference>
<sequence>MPQISRYSDEQVEQLLAELLNILEKHKAPTDLSLMVLGNMVTNLINTSIAPAQRQAIANSFARALQSSINEDKAH</sequence>
<proteinExistence type="inferred from homology"/>
<accession>B7NN02</accession>
<protein>
    <recommendedName>
        <fullName evidence="1">UPF0352 protein YejL</fullName>
    </recommendedName>
</protein>
<organism>
    <name type="scientific">Escherichia coli O7:K1 (strain IAI39 / ExPEC)</name>
    <dbReference type="NCBI Taxonomy" id="585057"/>
    <lineage>
        <taxon>Bacteria</taxon>
        <taxon>Pseudomonadati</taxon>
        <taxon>Pseudomonadota</taxon>
        <taxon>Gammaproteobacteria</taxon>
        <taxon>Enterobacterales</taxon>
        <taxon>Enterobacteriaceae</taxon>
        <taxon>Escherichia</taxon>
    </lineage>
</organism>
<comment type="similarity">
    <text evidence="1">Belongs to the UPF0352 family.</text>
</comment>
<evidence type="ECO:0000255" key="1">
    <source>
        <dbReference type="HAMAP-Rule" id="MF_00816"/>
    </source>
</evidence>
<name>YEJL_ECO7I</name>
<reference key="1">
    <citation type="journal article" date="2009" name="PLoS Genet.">
        <title>Organised genome dynamics in the Escherichia coli species results in highly diverse adaptive paths.</title>
        <authorList>
            <person name="Touchon M."/>
            <person name="Hoede C."/>
            <person name="Tenaillon O."/>
            <person name="Barbe V."/>
            <person name="Baeriswyl S."/>
            <person name="Bidet P."/>
            <person name="Bingen E."/>
            <person name="Bonacorsi S."/>
            <person name="Bouchier C."/>
            <person name="Bouvet O."/>
            <person name="Calteau A."/>
            <person name="Chiapello H."/>
            <person name="Clermont O."/>
            <person name="Cruveiller S."/>
            <person name="Danchin A."/>
            <person name="Diard M."/>
            <person name="Dossat C."/>
            <person name="Karoui M.E."/>
            <person name="Frapy E."/>
            <person name="Garry L."/>
            <person name="Ghigo J.M."/>
            <person name="Gilles A.M."/>
            <person name="Johnson J."/>
            <person name="Le Bouguenec C."/>
            <person name="Lescat M."/>
            <person name="Mangenot S."/>
            <person name="Martinez-Jehanne V."/>
            <person name="Matic I."/>
            <person name="Nassif X."/>
            <person name="Oztas S."/>
            <person name="Petit M.A."/>
            <person name="Pichon C."/>
            <person name="Rouy Z."/>
            <person name="Ruf C.S."/>
            <person name="Schneider D."/>
            <person name="Tourret J."/>
            <person name="Vacherie B."/>
            <person name="Vallenet D."/>
            <person name="Medigue C."/>
            <person name="Rocha E.P.C."/>
            <person name="Denamur E."/>
        </authorList>
    </citation>
    <scope>NUCLEOTIDE SEQUENCE [LARGE SCALE GENOMIC DNA]</scope>
    <source>
        <strain>IAI39 / ExPEC</strain>
    </source>
</reference>
<gene>
    <name evidence="1" type="primary">yejL</name>
    <name type="ordered locus">ECIAI39_2328</name>
</gene>